<name>Y466_BUCAI</name>
<dbReference type="EMBL" id="BA000003">
    <property type="protein sequence ID" value="BAB13163.1"/>
    <property type="molecule type" value="Genomic_DNA"/>
</dbReference>
<dbReference type="RefSeq" id="NP_240277.1">
    <property type="nucleotide sequence ID" value="NC_002528.1"/>
</dbReference>
<dbReference type="RefSeq" id="WP_010896131.1">
    <property type="nucleotide sequence ID" value="NC_002528.1"/>
</dbReference>
<dbReference type="SMR" id="P57538"/>
<dbReference type="STRING" id="563178.BUAP5A_459"/>
<dbReference type="EnsemblBacteria" id="BAB13163">
    <property type="protein sequence ID" value="BAB13163"/>
    <property type="gene ID" value="BAB13163"/>
</dbReference>
<dbReference type="KEGG" id="buc:BU466"/>
<dbReference type="PATRIC" id="fig|107806.10.peg.475"/>
<dbReference type="eggNOG" id="COG2814">
    <property type="taxonomic scope" value="Bacteria"/>
</dbReference>
<dbReference type="HOGENOM" id="CLU_001265_10_0_6"/>
<dbReference type="BioCyc" id="BAPH107806:GBZJ-459-MONOMER"/>
<dbReference type="Proteomes" id="UP000001806">
    <property type="component" value="Chromosome"/>
</dbReference>
<dbReference type="GO" id="GO:0005886">
    <property type="term" value="C:plasma membrane"/>
    <property type="evidence" value="ECO:0007669"/>
    <property type="project" value="UniProtKB-SubCell"/>
</dbReference>
<dbReference type="GO" id="GO:0022857">
    <property type="term" value="F:transmembrane transporter activity"/>
    <property type="evidence" value="ECO:0007669"/>
    <property type="project" value="InterPro"/>
</dbReference>
<dbReference type="CDD" id="cd17472">
    <property type="entry name" value="MFS_YajR_like"/>
    <property type="match status" value="1"/>
</dbReference>
<dbReference type="Gene3D" id="1.20.1250.20">
    <property type="entry name" value="MFS general substrate transporter like domains"/>
    <property type="match status" value="1"/>
</dbReference>
<dbReference type="InterPro" id="IPR011701">
    <property type="entry name" value="MFS"/>
</dbReference>
<dbReference type="InterPro" id="IPR020846">
    <property type="entry name" value="MFS_dom"/>
</dbReference>
<dbReference type="InterPro" id="IPR036259">
    <property type="entry name" value="MFS_trans_sf"/>
</dbReference>
<dbReference type="InterPro" id="IPR050171">
    <property type="entry name" value="MFS_Transporters"/>
</dbReference>
<dbReference type="PANTHER" id="PTHR23517:SF2">
    <property type="entry name" value="MULTIDRUG RESISTANCE PROTEIN MDTH"/>
    <property type="match status" value="1"/>
</dbReference>
<dbReference type="PANTHER" id="PTHR23517">
    <property type="entry name" value="RESISTANCE PROTEIN MDTM, PUTATIVE-RELATED-RELATED"/>
    <property type="match status" value="1"/>
</dbReference>
<dbReference type="Pfam" id="PF07690">
    <property type="entry name" value="MFS_1"/>
    <property type="match status" value="1"/>
</dbReference>
<dbReference type="SUPFAM" id="SSF103473">
    <property type="entry name" value="MFS general substrate transporter"/>
    <property type="match status" value="1"/>
</dbReference>
<dbReference type="PROSITE" id="PS50850">
    <property type="entry name" value="MFS"/>
    <property type="match status" value="1"/>
</dbReference>
<sequence>MNFLELQVTLSFCVIFLLRMLGMFMILPILSKYGMLLDGGNKFLIGLSMGIYGISQVIFQIPFGILSDKFNRKKIILLGLFMFFIGNIISASIHSIWGLIIGRFFQGSGAISGVCMAFLSDLIREENRVKSIAAIGVSFAISFLIAVVSGPIIVHYFGFFSIFWISAFLSIVCMIIVCFFVPFSKKNILKQNKTLHSYKKVLNFVLNKVFFRFYLGVFFLHFLLMIKFTMIPNQFEISGFSLDNHWKVYLGTILISFFVLFLFIFYCKYKYILENIIEICILFILFSEIIFLSAQKNLLFLIISLQIFFISFNFLEVFLSSHLSRQLSNNYRGSIMSIYSTSQFLGIFFGGVFSGWLYSFLNFSQIFYFELFIILLWLIFSFFLRNRFYL</sequence>
<proteinExistence type="inferred from homology"/>
<accession>P57538</accession>
<comment type="subcellular location">
    <subcellularLocation>
        <location evidence="2">Cell membrane</location>
        <topology evidence="2">Multi-pass membrane protein</topology>
    </subcellularLocation>
</comment>
<comment type="similarity">
    <text evidence="2">Belongs to the major facilitator superfamily.</text>
</comment>
<evidence type="ECO:0000255" key="1"/>
<evidence type="ECO:0000305" key="2"/>
<keyword id="KW-1003">Cell membrane</keyword>
<keyword id="KW-0472">Membrane</keyword>
<keyword id="KW-1185">Reference proteome</keyword>
<keyword id="KW-0812">Transmembrane</keyword>
<keyword id="KW-1133">Transmembrane helix</keyword>
<keyword id="KW-0813">Transport</keyword>
<gene>
    <name type="ordered locus">BU466</name>
</gene>
<reference key="1">
    <citation type="journal article" date="2000" name="Nature">
        <title>Genome sequence of the endocellular bacterial symbiont of aphids Buchnera sp. APS.</title>
        <authorList>
            <person name="Shigenobu S."/>
            <person name="Watanabe H."/>
            <person name="Hattori M."/>
            <person name="Sakaki Y."/>
            <person name="Ishikawa H."/>
        </authorList>
    </citation>
    <scope>NUCLEOTIDE SEQUENCE [LARGE SCALE GENOMIC DNA]</scope>
    <source>
        <strain>APS</strain>
    </source>
</reference>
<organism>
    <name type="scientific">Buchnera aphidicola subsp. Acyrthosiphon pisum (strain APS)</name>
    <name type="common">Acyrthosiphon pisum symbiotic bacterium</name>
    <dbReference type="NCBI Taxonomy" id="107806"/>
    <lineage>
        <taxon>Bacteria</taxon>
        <taxon>Pseudomonadati</taxon>
        <taxon>Pseudomonadota</taxon>
        <taxon>Gammaproteobacteria</taxon>
        <taxon>Enterobacterales</taxon>
        <taxon>Erwiniaceae</taxon>
        <taxon>Buchnera</taxon>
    </lineage>
</organism>
<feature type="chain" id="PRO_0000173412" description="Uncharacterized transporter BU466">
    <location>
        <begin position="1"/>
        <end position="390"/>
    </location>
</feature>
<feature type="transmembrane region" description="Helical" evidence="1">
    <location>
        <begin position="10"/>
        <end position="30"/>
    </location>
</feature>
<feature type="transmembrane region" description="Helical" evidence="1">
    <location>
        <begin position="43"/>
        <end position="63"/>
    </location>
</feature>
<feature type="transmembrane region" description="Helical" evidence="1">
    <location>
        <begin position="81"/>
        <end position="101"/>
    </location>
</feature>
<feature type="transmembrane region" description="Helical" evidence="1">
    <location>
        <begin position="134"/>
        <end position="154"/>
    </location>
</feature>
<feature type="transmembrane region" description="Helical" evidence="1">
    <location>
        <begin position="162"/>
        <end position="182"/>
    </location>
</feature>
<feature type="transmembrane region" description="Helical" evidence="1">
    <location>
        <begin position="213"/>
        <end position="233"/>
    </location>
</feature>
<feature type="transmembrane region" description="Helical" evidence="1">
    <location>
        <begin position="246"/>
        <end position="266"/>
    </location>
</feature>
<feature type="transmembrane region" description="Helical" evidence="1">
    <location>
        <begin position="272"/>
        <end position="292"/>
    </location>
</feature>
<feature type="transmembrane region" description="Helical" evidence="1">
    <location>
        <begin position="298"/>
        <end position="318"/>
    </location>
</feature>
<feature type="transmembrane region" description="Helical" evidence="1">
    <location>
        <begin position="341"/>
        <end position="361"/>
    </location>
</feature>
<feature type="transmembrane region" description="Helical" evidence="1">
    <location>
        <begin position="363"/>
        <end position="383"/>
    </location>
</feature>
<protein>
    <recommendedName>
        <fullName>Uncharacterized transporter BU466</fullName>
    </recommendedName>
</protein>